<reference key="1">
    <citation type="journal article" date="1990" name="Comp. Biochem. Physiol.">
        <title>Opossum (Didelphis virginiana) 'little' and 'big' gastrins.</title>
        <authorList>
            <person name="Shinomura Y."/>
            <person name="Eng J."/>
            <person name="Rattan S.C."/>
            <person name="Yalow R.S."/>
        </authorList>
    </citation>
    <scope>PROTEIN SEQUENCE</scope>
    <scope>PYROGLUTAMATE FORMATION AT GLN-1 AND GLN-18</scope>
    <scope>SULFATION AT TYR-28</scope>
    <scope>AMIDATION AT PHE-33</scope>
</reference>
<dbReference type="PIR" id="A60506">
    <property type="entry name" value="A60506"/>
</dbReference>
<dbReference type="GO" id="GO:0005615">
    <property type="term" value="C:extracellular space"/>
    <property type="evidence" value="ECO:0007669"/>
    <property type="project" value="TreeGrafter"/>
</dbReference>
<dbReference type="GO" id="GO:0005179">
    <property type="term" value="F:hormone activity"/>
    <property type="evidence" value="ECO:0007669"/>
    <property type="project" value="UniProtKB-KW"/>
</dbReference>
<dbReference type="GO" id="GO:0007186">
    <property type="term" value="P:G protein-coupled receptor signaling pathway"/>
    <property type="evidence" value="ECO:0007669"/>
    <property type="project" value="TreeGrafter"/>
</dbReference>
<dbReference type="GO" id="GO:0032094">
    <property type="term" value="P:response to food"/>
    <property type="evidence" value="ECO:0007669"/>
    <property type="project" value="TreeGrafter"/>
</dbReference>
<dbReference type="InterPro" id="IPR039236">
    <property type="entry name" value="GAST"/>
</dbReference>
<dbReference type="InterPro" id="IPR013152">
    <property type="entry name" value="Gastrin/cholecystokinin_CS"/>
</dbReference>
<dbReference type="PANTHER" id="PTHR19309">
    <property type="entry name" value="GASTRIN"/>
    <property type="match status" value="1"/>
</dbReference>
<dbReference type="PANTHER" id="PTHR19309:SF0">
    <property type="entry name" value="GASTRIN"/>
    <property type="match status" value="1"/>
</dbReference>
<dbReference type="PROSITE" id="PS00259">
    <property type="entry name" value="GASTRIN"/>
    <property type="match status" value="1"/>
</dbReference>
<gene>
    <name type="primary">GAST</name>
    <name type="synonym">GAS</name>
</gene>
<proteinExistence type="evidence at protein level"/>
<keyword id="KW-0027">Amidation</keyword>
<keyword id="KW-0165">Cleavage on pair of basic residues</keyword>
<keyword id="KW-0903">Direct protein sequencing</keyword>
<keyword id="KW-0372">Hormone</keyword>
<keyword id="KW-0873">Pyrrolidone carboxylic acid</keyword>
<keyword id="KW-0964">Secreted</keyword>
<keyword id="KW-0765">Sulfation</keyword>
<evidence type="ECO:0000269" key="1">
    <source>
    </source>
</evidence>
<evidence type="ECO:0000305" key="2"/>
<sequence length="33" mass="3856">QLGPQDLPYLTADLSKKQGPWLEEEEAYGWMDF</sequence>
<name>GAST_DIDVI</name>
<organism>
    <name type="scientific">Didelphis virginiana</name>
    <name type="common">North American opossum</name>
    <name type="synonym">Didelphis marsupialis virginiana</name>
    <dbReference type="NCBI Taxonomy" id="9267"/>
    <lineage>
        <taxon>Eukaryota</taxon>
        <taxon>Metazoa</taxon>
        <taxon>Chordata</taxon>
        <taxon>Craniata</taxon>
        <taxon>Vertebrata</taxon>
        <taxon>Euteleostomi</taxon>
        <taxon>Mammalia</taxon>
        <taxon>Metatheria</taxon>
        <taxon>Didelphimorphia</taxon>
        <taxon>Didelphidae</taxon>
        <taxon>Didelphis</taxon>
    </lineage>
</organism>
<protein>
    <recommendedName>
        <fullName>Gastrin</fullName>
    </recommendedName>
    <component>
        <recommendedName>
            <fullName>Big gastrin</fullName>
        </recommendedName>
        <alternativeName>
            <fullName>Gastrin-33</fullName>
            <shortName>G33</shortName>
        </alternativeName>
    </component>
    <component>
        <recommendedName>
            <fullName>Gastrin</fullName>
        </recommendedName>
    </component>
</protein>
<accession>P33713</accession>
<feature type="peptide" id="PRO_0000010623" description="Big gastrin" evidence="1">
    <location>
        <begin position="1"/>
        <end position="33"/>
    </location>
</feature>
<feature type="peptide" id="PRO_0000010624" description="Gastrin" evidence="1">
    <location>
        <begin position="18"/>
        <end position="33"/>
    </location>
</feature>
<feature type="modified residue" description="Pyrrolidone carboxylic acid" evidence="1">
    <location>
        <position position="1"/>
    </location>
</feature>
<feature type="modified residue" description="Pyrrolidone carboxylic acid" evidence="1">
    <location>
        <position position="18"/>
    </location>
</feature>
<feature type="modified residue" description="Sulfotyrosine" evidence="1">
    <location>
        <position position="28"/>
    </location>
</feature>
<feature type="modified residue" description="Phenylalanine amide" evidence="1">
    <location>
        <position position="33"/>
    </location>
</feature>
<comment type="function">
    <text>Gastrin stimulates the stomach mucosa to produce and secrete hydrochloric acid and the pancreas to secrete its digestive enzymes. It also stimulates smooth muscle contraction and increases blood circulation and water secretion in the stomach and intestine.</text>
</comment>
<comment type="subcellular location">
    <subcellularLocation>
        <location>Secreted</location>
    </subcellularLocation>
</comment>
<comment type="similarity">
    <text evidence="2">Belongs to the gastrin/cholecystokinin family.</text>
</comment>